<organism>
    <name type="scientific">Geobacillus stearothermophilus</name>
    <name type="common">Bacillus stearothermophilus</name>
    <dbReference type="NCBI Taxonomy" id="1422"/>
    <lineage>
        <taxon>Bacteria</taxon>
        <taxon>Bacillati</taxon>
        <taxon>Bacillota</taxon>
        <taxon>Bacilli</taxon>
        <taxon>Bacillales</taxon>
        <taxon>Anoxybacillaceae</taxon>
        <taxon>Geobacillus</taxon>
    </lineage>
</organism>
<protein>
    <recommendedName>
        <fullName evidence="2">PTS system cellobiose-specific EIIC component</fullName>
    </recommendedName>
    <alternativeName>
        <fullName evidence="2">Cellobiose permease IIC component</fullName>
    </alternativeName>
    <alternativeName>
        <fullName evidence="2">EIIC-Cel</fullName>
    </alternativeName>
</protein>
<gene>
    <name evidence="2" type="primary">celB</name>
</gene>
<dbReference type="EMBL" id="U07818">
    <property type="protein sequence ID" value="AAA17390.1"/>
    <property type="molecule type" value="Unassigned_DNA"/>
</dbReference>
<dbReference type="PIR" id="C49898">
    <property type="entry name" value="C49898"/>
</dbReference>
<dbReference type="SMR" id="Q45400"/>
<dbReference type="GO" id="GO:0005886">
    <property type="term" value="C:plasma membrane"/>
    <property type="evidence" value="ECO:0007669"/>
    <property type="project" value="UniProtKB-SubCell"/>
</dbReference>
<dbReference type="GO" id="GO:0008982">
    <property type="term" value="F:protein-N(PI)-phosphohistidine-sugar phosphotransferase activity"/>
    <property type="evidence" value="ECO:0007669"/>
    <property type="project" value="InterPro"/>
</dbReference>
<dbReference type="GO" id="GO:1901264">
    <property type="term" value="P:carbohydrate derivative transport"/>
    <property type="evidence" value="ECO:0007669"/>
    <property type="project" value="TreeGrafter"/>
</dbReference>
<dbReference type="GO" id="GO:0009401">
    <property type="term" value="P:phosphoenolpyruvate-dependent sugar phosphotransferase system"/>
    <property type="evidence" value="ECO:0007669"/>
    <property type="project" value="UniProtKB-KW"/>
</dbReference>
<dbReference type="InterPro" id="IPR003352">
    <property type="entry name" value="PTS_EIIC"/>
</dbReference>
<dbReference type="InterPro" id="IPR004501">
    <property type="entry name" value="PTS_EIIC_3"/>
</dbReference>
<dbReference type="InterPro" id="IPR004796">
    <property type="entry name" value="PTS_IIC_cello"/>
</dbReference>
<dbReference type="InterPro" id="IPR051088">
    <property type="entry name" value="PTS_Sugar-EIIC/EIIB"/>
</dbReference>
<dbReference type="NCBIfam" id="TIGR00359">
    <property type="entry name" value="cello_pts_IIC"/>
    <property type="match status" value="1"/>
</dbReference>
<dbReference type="NCBIfam" id="TIGR00410">
    <property type="entry name" value="lacE"/>
    <property type="match status" value="1"/>
</dbReference>
<dbReference type="PANTHER" id="PTHR33989">
    <property type="match status" value="1"/>
</dbReference>
<dbReference type="PANTHER" id="PTHR33989:SF11">
    <property type="entry name" value="LICHENAN PERMEASE IIC COMPONENT"/>
    <property type="match status" value="1"/>
</dbReference>
<dbReference type="Pfam" id="PF02378">
    <property type="entry name" value="PTS_EIIC"/>
    <property type="match status" value="1"/>
</dbReference>
<dbReference type="PIRSF" id="PIRSF006351">
    <property type="entry name" value="PTS_EIIC-Cellobiose"/>
    <property type="match status" value="1"/>
</dbReference>
<dbReference type="PROSITE" id="PS51105">
    <property type="entry name" value="PTS_EIIC_TYPE_3"/>
    <property type="match status" value="1"/>
</dbReference>
<reference key="1">
    <citation type="journal article" date="1993" name="J. Bacteriol.">
        <title>Cloning and sequencing of a cellobiose phosphotransferase system operon from Bacillus stearothermophilus XL-65-6 and functional expression in Escherichia coli.</title>
        <authorList>
            <person name="Lai X."/>
            <person name="Ingram L.O."/>
        </authorList>
    </citation>
    <scope>NUCLEOTIDE SEQUENCE [GENOMIC DNA]</scope>
    <scope>FUNCTION</scope>
    <source>
        <strain>XL-65-6</strain>
    </source>
</reference>
<evidence type="ECO:0000255" key="1">
    <source>
        <dbReference type="PROSITE-ProRule" id="PRU00428"/>
    </source>
</evidence>
<evidence type="ECO:0000303" key="2">
    <source>
    </source>
</evidence>
<evidence type="ECO:0000305" key="3">
    <source>
    </source>
</evidence>
<keyword id="KW-1003">Cell membrane</keyword>
<keyword id="KW-0472">Membrane</keyword>
<keyword id="KW-0598">Phosphotransferase system</keyword>
<keyword id="KW-0762">Sugar transport</keyword>
<keyword id="KW-0812">Transmembrane</keyword>
<keyword id="KW-1133">Transmembrane helix</keyword>
<keyword id="KW-0813">Transport</keyword>
<sequence length="451" mass="48805">MDRFIRMLEDRVMPVAGKIAEQRHLQAIRDGIILSMPLLIIGSLFLIVGFLPIPGYNEWMAKWFGEHWLDKLLYPVGATFDIMALVVSFGVAYRLAEKYKVDALSAGAISLAAFLLATPYQVPFTPEGAKETIMVSGGIPVQWVGSKGLFVAMILAIVSTEIYRKIIQKNIVIKLPDGVPPAVARSFVALIPGAAVLVVVWVARLILEMTPFESFHNIVSVLLNKPLSVLGGSVFGAIVAVLLVQLLWSTGLHGAAIVGGVMGPIWLSLMDENRMVFQQNPNAELPNVITQQFFDLWIYIGGSGATLALALTMMFRARSRQLKSLGRLAIAPGIFNINEPITFGMPIVMNPLLIIPFILVPVVLVVVSYAAMATGLVAKPSGVAVPWTTPIVISGYLATGGKISGSILQIVNFFIAFAIYYPFFSIWDKQKAAEEQADPTISSGAGATHSL</sequence>
<accession>Q45400</accession>
<feature type="chain" id="PRO_0000186483" description="PTS system cellobiose-specific EIIC component">
    <location>
        <begin position="1"/>
        <end position="451"/>
    </location>
</feature>
<feature type="transmembrane region" description="Helical" evidence="1">
    <location>
        <begin position="31"/>
        <end position="51"/>
    </location>
</feature>
<feature type="transmembrane region" description="Helical" evidence="1">
    <location>
        <begin position="72"/>
        <end position="92"/>
    </location>
</feature>
<feature type="transmembrane region" description="Helical" evidence="1">
    <location>
        <begin position="104"/>
        <end position="124"/>
    </location>
</feature>
<feature type="transmembrane region" description="Helical" evidence="1">
    <location>
        <begin position="138"/>
        <end position="158"/>
    </location>
</feature>
<feature type="transmembrane region" description="Helical" evidence="1">
    <location>
        <begin position="187"/>
        <end position="207"/>
    </location>
</feature>
<feature type="transmembrane region" description="Helical" evidence="1">
    <location>
        <begin position="227"/>
        <end position="247"/>
    </location>
</feature>
<feature type="transmembrane region" description="Helical" evidence="1">
    <location>
        <begin position="250"/>
        <end position="270"/>
    </location>
</feature>
<feature type="transmembrane region" description="Helical" evidence="1">
    <location>
        <begin position="293"/>
        <end position="313"/>
    </location>
</feature>
<feature type="transmembrane region" description="Helical" evidence="1">
    <location>
        <begin position="347"/>
        <end position="367"/>
    </location>
</feature>
<feature type="transmembrane region" description="Helical" evidence="1">
    <location>
        <begin position="407"/>
        <end position="427"/>
    </location>
</feature>
<feature type="domain" description="PTS EIIC type-3" evidence="1">
    <location>
        <begin position="8"/>
        <end position="423"/>
    </location>
</feature>
<proteinExistence type="inferred from homology"/>
<name>PTEC_GEOSE</name>
<comment type="function">
    <text evidence="3">The phosphoenolpyruvate-dependent sugar phosphotransferase system (sugar PTS), a major carbohydrate active transport system, catalyzes the phosphorylation of incoming sugar substrates concomitantly with their translocation across the cell membrane. The enzyme II CelABD PTS system is involved in cellobiose transport.</text>
</comment>
<comment type="subcellular location">
    <subcellularLocation>
        <location evidence="1">Cell membrane</location>
        <topology evidence="1">Multi-pass membrane protein</topology>
    </subcellularLocation>
</comment>
<comment type="domain">
    <text evidence="1">The EIIC type-3 domain forms the PTS system translocation channel and contains the specific substrate-binding site.</text>
</comment>